<evidence type="ECO:0000255" key="1">
    <source>
        <dbReference type="HAMAP-Rule" id="MF_00235"/>
    </source>
</evidence>
<dbReference type="EC" id="2.7.4.3" evidence="1"/>
<dbReference type="EMBL" id="CP000612">
    <property type="protein sequence ID" value="ABO50245.1"/>
    <property type="molecule type" value="Genomic_DNA"/>
</dbReference>
<dbReference type="RefSeq" id="WP_011878059.1">
    <property type="nucleotide sequence ID" value="NC_009253.1"/>
</dbReference>
<dbReference type="SMR" id="A4J592"/>
<dbReference type="STRING" id="349161.Dred_1718"/>
<dbReference type="KEGG" id="drm:Dred_1718"/>
<dbReference type="eggNOG" id="COG0563">
    <property type="taxonomic scope" value="Bacteria"/>
</dbReference>
<dbReference type="HOGENOM" id="CLU_032354_1_2_9"/>
<dbReference type="OrthoDB" id="9805030at2"/>
<dbReference type="UniPathway" id="UPA00588">
    <property type="reaction ID" value="UER00649"/>
</dbReference>
<dbReference type="Proteomes" id="UP000001556">
    <property type="component" value="Chromosome"/>
</dbReference>
<dbReference type="GO" id="GO:0005737">
    <property type="term" value="C:cytoplasm"/>
    <property type="evidence" value="ECO:0007669"/>
    <property type="project" value="UniProtKB-SubCell"/>
</dbReference>
<dbReference type="GO" id="GO:0004017">
    <property type="term" value="F:adenylate kinase activity"/>
    <property type="evidence" value="ECO:0007669"/>
    <property type="project" value="UniProtKB-UniRule"/>
</dbReference>
<dbReference type="GO" id="GO:0005524">
    <property type="term" value="F:ATP binding"/>
    <property type="evidence" value="ECO:0007669"/>
    <property type="project" value="UniProtKB-UniRule"/>
</dbReference>
<dbReference type="GO" id="GO:0008270">
    <property type="term" value="F:zinc ion binding"/>
    <property type="evidence" value="ECO:0007669"/>
    <property type="project" value="UniProtKB-UniRule"/>
</dbReference>
<dbReference type="GO" id="GO:0044209">
    <property type="term" value="P:AMP salvage"/>
    <property type="evidence" value="ECO:0007669"/>
    <property type="project" value="UniProtKB-UniRule"/>
</dbReference>
<dbReference type="CDD" id="cd01428">
    <property type="entry name" value="ADK"/>
    <property type="match status" value="1"/>
</dbReference>
<dbReference type="FunFam" id="3.40.50.300:FF:000106">
    <property type="entry name" value="Adenylate kinase mitochondrial"/>
    <property type="match status" value="1"/>
</dbReference>
<dbReference type="Gene3D" id="3.40.50.300">
    <property type="entry name" value="P-loop containing nucleotide triphosphate hydrolases"/>
    <property type="match status" value="1"/>
</dbReference>
<dbReference type="HAMAP" id="MF_00235">
    <property type="entry name" value="Adenylate_kinase_Adk"/>
    <property type="match status" value="1"/>
</dbReference>
<dbReference type="InterPro" id="IPR006259">
    <property type="entry name" value="Adenyl_kin_sub"/>
</dbReference>
<dbReference type="InterPro" id="IPR000850">
    <property type="entry name" value="Adenylat/UMP-CMP_kin"/>
</dbReference>
<dbReference type="InterPro" id="IPR033690">
    <property type="entry name" value="Adenylat_kinase_CS"/>
</dbReference>
<dbReference type="InterPro" id="IPR007862">
    <property type="entry name" value="Adenylate_kinase_lid-dom"/>
</dbReference>
<dbReference type="InterPro" id="IPR027417">
    <property type="entry name" value="P-loop_NTPase"/>
</dbReference>
<dbReference type="NCBIfam" id="TIGR01351">
    <property type="entry name" value="adk"/>
    <property type="match status" value="1"/>
</dbReference>
<dbReference type="NCBIfam" id="NF001380">
    <property type="entry name" value="PRK00279.1-2"/>
    <property type="match status" value="1"/>
</dbReference>
<dbReference type="NCBIfam" id="NF001381">
    <property type="entry name" value="PRK00279.1-3"/>
    <property type="match status" value="1"/>
</dbReference>
<dbReference type="NCBIfam" id="NF011100">
    <property type="entry name" value="PRK14527.1"/>
    <property type="match status" value="1"/>
</dbReference>
<dbReference type="PANTHER" id="PTHR23359">
    <property type="entry name" value="NUCLEOTIDE KINASE"/>
    <property type="match status" value="1"/>
</dbReference>
<dbReference type="Pfam" id="PF00406">
    <property type="entry name" value="ADK"/>
    <property type="match status" value="1"/>
</dbReference>
<dbReference type="Pfam" id="PF05191">
    <property type="entry name" value="ADK_lid"/>
    <property type="match status" value="1"/>
</dbReference>
<dbReference type="PRINTS" id="PR00094">
    <property type="entry name" value="ADENYLTKNASE"/>
</dbReference>
<dbReference type="SUPFAM" id="SSF52540">
    <property type="entry name" value="P-loop containing nucleoside triphosphate hydrolases"/>
    <property type="match status" value="1"/>
</dbReference>
<dbReference type="PROSITE" id="PS00113">
    <property type="entry name" value="ADENYLATE_KINASE"/>
    <property type="match status" value="1"/>
</dbReference>
<keyword id="KW-0067">ATP-binding</keyword>
<keyword id="KW-0963">Cytoplasm</keyword>
<keyword id="KW-0418">Kinase</keyword>
<keyword id="KW-0479">Metal-binding</keyword>
<keyword id="KW-0545">Nucleotide biosynthesis</keyword>
<keyword id="KW-0547">Nucleotide-binding</keyword>
<keyword id="KW-1185">Reference proteome</keyword>
<keyword id="KW-0808">Transferase</keyword>
<keyword id="KW-0862">Zinc</keyword>
<sequence>MNLLIMGPPGAGKGTQAEVLVKELKITHISTGDMFRAAIKEGTEMGKKAKEYMDKGALVPDEVVIGMVKDRLSQADCKEGFLLDGFPRTVEQASALDATLQDLGIKLDAVINIEVPLEKLMARLTGRRVCKNCGASYHVIFNPPQAEGKCNSCNGELYQRSDDNEESVGTRLNAYIEKTKPLIDYYEAKGILKNINGDQEISAVLNDILVAVK</sequence>
<feature type="chain" id="PRO_1000071799" description="Adenylate kinase">
    <location>
        <begin position="1"/>
        <end position="213"/>
    </location>
</feature>
<feature type="region of interest" description="NMP" evidence="1">
    <location>
        <begin position="30"/>
        <end position="59"/>
    </location>
</feature>
<feature type="region of interest" description="LID" evidence="1">
    <location>
        <begin position="126"/>
        <end position="163"/>
    </location>
</feature>
<feature type="binding site" evidence="1">
    <location>
        <begin position="10"/>
        <end position="15"/>
    </location>
    <ligand>
        <name>ATP</name>
        <dbReference type="ChEBI" id="CHEBI:30616"/>
    </ligand>
</feature>
<feature type="binding site" evidence="1">
    <location>
        <position position="31"/>
    </location>
    <ligand>
        <name>AMP</name>
        <dbReference type="ChEBI" id="CHEBI:456215"/>
    </ligand>
</feature>
<feature type="binding site" evidence="1">
    <location>
        <position position="36"/>
    </location>
    <ligand>
        <name>AMP</name>
        <dbReference type="ChEBI" id="CHEBI:456215"/>
    </ligand>
</feature>
<feature type="binding site" evidence="1">
    <location>
        <begin position="57"/>
        <end position="59"/>
    </location>
    <ligand>
        <name>AMP</name>
        <dbReference type="ChEBI" id="CHEBI:456215"/>
    </ligand>
</feature>
<feature type="binding site" evidence="1">
    <location>
        <begin position="85"/>
        <end position="88"/>
    </location>
    <ligand>
        <name>AMP</name>
        <dbReference type="ChEBI" id="CHEBI:456215"/>
    </ligand>
</feature>
<feature type="binding site" evidence="1">
    <location>
        <position position="92"/>
    </location>
    <ligand>
        <name>AMP</name>
        <dbReference type="ChEBI" id="CHEBI:456215"/>
    </ligand>
</feature>
<feature type="binding site" evidence="1">
    <location>
        <position position="127"/>
    </location>
    <ligand>
        <name>ATP</name>
        <dbReference type="ChEBI" id="CHEBI:30616"/>
    </ligand>
</feature>
<feature type="binding site" evidence="1">
    <location>
        <position position="130"/>
    </location>
    <ligand>
        <name>Zn(2+)</name>
        <dbReference type="ChEBI" id="CHEBI:29105"/>
        <note>structural</note>
    </ligand>
</feature>
<feature type="binding site" evidence="1">
    <location>
        <position position="133"/>
    </location>
    <ligand>
        <name>Zn(2+)</name>
        <dbReference type="ChEBI" id="CHEBI:29105"/>
        <note>structural</note>
    </ligand>
</feature>
<feature type="binding site" evidence="1">
    <location>
        <begin position="136"/>
        <end position="137"/>
    </location>
    <ligand>
        <name>ATP</name>
        <dbReference type="ChEBI" id="CHEBI:30616"/>
    </ligand>
</feature>
<feature type="binding site" evidence="1">
    <location>
        <position position="150"/>
    </location>
    <ligand>
        <name>Zn(2+)</name>
        <dbReference type="ChEBI" id="CHEBI:29105"/>
        <note>structural</note>
    </ligand>
</feature>
<feature type="binding site" evidence="1">
    <location>
        <position position="153"/>
    </location>
    <ligand>
        <name>Zn(2+)</name>
        <dbReference type="ChEBI" id="CHEBI:29105"/>
        <note>structural</note>
    </ligand>
</feature>
<feature type="binding site" evidence="1">
    <location>
        <position position="160"/>
    </location>
    <ligand>
        <name>AMP</name>
        <dbReference type="ChEBI" id="CHEBI:456215"/>
    </ligand>
</feature>
<feature type="binding site" evidence="1">
    <location>
        <position position="171"/>
    </location>
    <ligand>
        <name>AMP</name>
        <dbReference type="ChEBI" id="CHEBI:456215"/>
    </ligand>
</feature>
<feature type="binding site" evidence="1">
    <location>
        <position position="199"/>
    </location>
    <ligand>
        <name>ATP</name>
        <dbReference type="ChEBI" id="CHEBI:30616"/>
    </ligand>
</feature>
<reference key="1">
    <citation type="submission" date="2007-03" db="EMBL/GenBank/DDBJ databases">
        <title>Complete sequence of Desulfotomaculum reducens MI-1.</title>
        <authorList>
            <consortium name="US DOE Joint Genome Institute"/>
            <person name="Copeland A."/>
            <person name="Lucas S."/>
            <person name="Lapidus A."/>
            <person name="Barry K."/>
            <person name="Detter J.C."/>
            <person name="Glavina del Rio T."/>
            <person name="Hammon N."/>
            <person name="Israni S."/>
            <person name="Dalin E."/>
            <person name="Tice H."/>
            <person name="Pitluck S."/>
            <person name="Sims D."/>
            <person name="Brettin T."/>
            <person name="Bruce D."/>
            <person name="Han C."/>
            <person name="Tapia R."/>
            <person name="Schmutz J."/>
            <person name="Larimer F."/>
            <person name="Land M."/>
            <person name="Hauser L."/>
            <person name="Kyrpides N."/>
            <person name="Kim E."/>
            <person name="Tebo B.M."/>
            <person name="Richardson P."/>
        </authorList>
    </citation>
    <scope>NUCLEOTIDE SEQUENCE [LARGE SCALE GENOMIC DNA]</scope>
    <source>
        <strain>ATCC BAA-1160 / DSM 100696 / MI-1</strain>
    </source>
</reference>
<organism>
    <name type="scientific">Desulforamulus reducens (strain ATCC BAA-1160 / DSM 100696 / MI-1)</name>
    <name type="common">Desulfotomaculum reducens</name>
    <dbReference type="NCBI Taxonomy" id="349161"/>
    <lineage>
        <taxon>Bacteria</taxon>
        <taxon>Bacillati</taxon>
        <taxon>Bacillota</taxon>
        <taxon>Clostridia</taxon>
        <taxon>Eubacteriales</taxon>
        <taxon>Peptococcaceae</taxon>
        <taxon>Desulforamulus</taxon>
    </lineage>
</organism>
<gene>
    <name evidence="1" type="primary">adk</name>
    <name type="ordered locus">Dred_1718</name>
</gene>
<name>KAD_DESRM</name>
<proteinExistence type="inferred from homology"/>
<protein>
    <recommendedName>
        <fullName evidence="1">Adenylate kinase</fullName>
        <shortName evidence="1">AK</shortName>
        <ecNumber evidence="1">2.7.4.3</ecNumber>
    </recommendedName>
    <alternativeName>
        <fullName evidence="1">ATP-AMP transphosphorylase</fullName>
    </alternativeName>
    <alternativeName>
        <fullName evidence="1">ATP:AMP phosphotransferase</fullName>
    </alternativeName>
    <alternativeName>
        <fullName evidence="1">Adenylate monophosphate kinase</fullName>
    </alternativeName>
</protein>
<accession>A4J592</accession>
<comment type="function">
    <text evidence="1">Catalyzes the reversible transfer of the terminal phosphate group between ATP and AMP. Plays an important role in cellular energy homeostasis and in adenine nucleotide metabolism.</text>
</comment>
<comment type="catalytic activity">
    <reaction evidence="1">
        <text>AMP + ATP = 2 ADP</text>
        <dbReference type="Rhea" id="RHEA:12973"/>
        <dbReference type="ChEBI" id="CHEBI:30616"/>
        <dbReference type="ChEBI" id="CHEBI:456215"/>
        <dbReference type="ChEBI" id="CHEBI:456216"/>
        <dbReference type="EC" id="2.7.4.3"/>
    </reaction>
</comment>
<comment type="pathway">
    <text evidence="1">Purine metabolism; AMP biosynthesis via salvage pathway; AMP from ADP: step 1/1.</text>
</comment>
<comment type="subunit">
    <text evidence="1">Monomer.</text>
</comment>
<comment type="subcellular location">
    <subcellularLocation>
        <location evidence="1">Cytoplasm</location>
    </subcellularLocation>
</comment>
<comment type="domain">
    <text evidence="1">Consists of three domains, a large central CORE domain and two small peripheral domains, NMPbind and LID, which undergo movements during catalysis. The LID domain closes over the site of phosphoryl transfer upon ATP binding. Assembling and dissambling the active center during each catalytic cycle provides an effective means to prevent ATP hydrolysis. Some bacteria have evolved a zinc-coordinating structure that stabilizes the LID domain.</text>
</comment>
<comment type="similarity">
    <text evidence="1">Belongs to the adenylate kinase family.</text>
</comment>